<organism>
    <name type="scientific">Xanthomonas campestris pv. campestris (strain 8004)</name>
    <dbReference type="NCBI Taxonomy" id="314565"/>
    <lineage>
        <taxon>Bacteria</taxon>
        <taxon>Pseudomonadati</taxon>
        <taxon>Pseudomonadota</taxon>
        <taxon>Gammaproteobacteria</taxon>
        <taxon>Lysobacterales</taxon>
        <taxon>Lysobacteraceae</taxon>
        <taxon>Xanthomonas</taxon>
    </lineage>
</organism>
<gene>
    <name evidence="1" type="primary">gmk</name>
    <name type="ordered locus">XC_0958</name>
</gene>
<feature type="chain" id="PRO_0000266435" description="Guanylate kinase">
    <location>
        <begin position="1"/>
        <end position="203"/>
    </location>
</feature>
<feature type="domain" description="Guanylate kinase-like" evidence="1">
    <location>
        <begin position="3"/>
        <end position="181"/>
    </location>
</feature>
<feature type="binding site" evidence="1">
    <location>
        <begin position="10"/>
        <end position="17"/>
    </location>
    <ligand>
        <name>ATP</name>
        <dbReference type="ChEBI" id="CHEBI:30616"/>
    </ligand>
</feature>
<keyword id="KW-0067">ATP-binding</keyword>
<keyword id="KW-0963">Cytoplasm</keyword>
<keyword id="KW-0418">Kinase</keyword>
<keyword id="KW-0547">Nucleotide-binding</keyword>
<keyword id="KW-0808">Transferase</keyword>
<protein>
    <recommendedName>
        <fullName evidence="1">Guanylate kinase</fullName>
        <ecNumber evidence="1">2.7.4.8</ecNumber>
    </recommendedName>
    <alternativeName>
        <fullName evidence="1">GMP kinase</fullName>
    </alternativeName>
</protein>
<proteinExistence type="inferred from homology"/>
<name>KGUA_XANC8</name>
<accession>Q4UY41</accession>
<dbReference type="EC" id="2.7.4.8" evidence="1"/>
<dbReference type="EMBL" id="CP000050">
    <property type="protein sequence ID" value="AAY48032.1"/>
    <property type="molecule type" value="Genomic_DNA"/>
</dbReference>
<dbReference type="RefSeq" id="WP_011038351.1">
    <property type="nucleotide sequence ID" value="NZ_CP155948.1"/>
</dbReference>
<dbReference type="SMR" id="Q4UY41"/>
<dbReference type="GeneID" id="77336350"/>
<dbReference type="KEGG" id="xcb:XC_0958"/>
<dbReference type="HOGENOM" id="CLU_001715_1_0_6"/>
<dbReference type="Proteomes" id="UP000000420">
    <property type="component" value="Chromosome"/>
</dbReference>
<dbReference type="GO" id="GO:0005829">
    <property type="term" value="C:cytosol"/>
    <property type="evidence" value="ECO:0007669"/>
    <property type="project" value="TreeGrafter"/>
</dbReference>
<dbReference type="GO" id="GO:0005524">
    <property type="term" value="F:ATP binding"/>
    <property type="evidence" value="ECO:0007669"/>
    <property type="project" value="UniProtKB-UniRule"/>
</dbReference>
<dbReference type="GO" id="GO:0004385">
    <property type="term" value="F:guanylate kinase activity"/>
    <property type="evidence" value="ECO:0007669"/>
    <property type="project" value="UniProtKB-UniRule"/>
</dbReference>
<dbReference type="CDD" id="cd00071">
    <property type="entry name" value="GMPK"/>
    <property type="match status" value="1"/>
</dbReference>
<dbReference type="FunFam" id="3.30.63.10:FF:000005">
    <property type="entry name" value="Guanylate kinase"/>
    <property type="match status" value="1"/>
</dbReference>
<dbReference type="FunFam" id="3.40.50.300:FF:000084">
    <property type="entry name" value="Guanylate kinase"/>
    <property type="match status" value="1"/>
</dbReference>
<dbReference type="Gene3D" id="3.30.63.10">
    <property type="entry name" value="Guanylate Kinase phosphate binding domain"/>
    <property type="match status" value="1"/>
</dbReference>
<dbReference type="Gene3D" id="3.40.50.300">
    <property type="entry name" value="P-loop containing nucleotide triphosphate hydrolases"/>
    <property type="match status" value="1"/>
</dbReference>
<dbReference type="HAMAP" id="MF_00328">
    <property type="entry name" value="Guanylate_kinase"/>
    <property type="match status" value="1"/>
</dbReference>
<dbReference type="InterPro" id="IPR008145">
    <property type="entry name" value="GK/Ca_channel_bsu"/>
</dbReference>
<dbReference type="InterPro" id="IPR008144">
    <property type="entry name" value="Guanylate_kin-like_dom"/>
</dbReference>
<dbReference type="InterPro" id="IPR017665">
    <property type="entry name" value="Guanylate_kinase"/>
</dbReference>
<dbReference type="InterPro" id="IPR020590">
    <property type="entry name" value="Guanylate_kinase_CS"/>
</dbReference>
<dbReference type="InterPro" id="IPR027417">
    <property type="entry name" value="P-loop_NTPase"/>
</dbReference>
<dbReference type="NCBIfam" id="TIGR03263">
    <property type="entry name" value="guanyl_kin"/>
    <property type="match status" value="1"/>
</dbReference>
<dbReference type="PANTHER" id="PTHR23117:SF13">
    <property type="entry name" value="GUANYLATE KINASE"/>
    <property type="match status" value="1"/>
</dbReference>
<dbReference type="PANTHER" id="PTHR23117">
    <property type="entry name" value="GUANYLATE KINASE-RELATED"/>
    <property type="match status" value="1"/>
</dbReference>
<dbReference type="Pfam" id="PF00625">
    <property type="entry name" value="Guanylate_kin"/>
    <property type="match status" value="1"/>
</dbReference>
<dbReference type="SMART" id="SM00072">
    <property type="entry name" value="GuKc"/>
    <property type="match status" value="1"/>
</dbReference>
<dbReference type="SUPFAM" id="SSF52540">
    <property type="entry name" value="P-loop containing nucleoside triphosphate hydrolases"/>
    <property type="match status" value="1"/>
</dbReference>
<dbReference type="PROSITE" id="PS00856">
    <property type="entry name" value="GUANYLATE_KINASE_1"/>
    <property type="match status" value="1"/>
</dbReference>
<dbReference type="PROSITE" id="PS50052">
    <property type="entry name" value="GUANYLATE_KINASE_2"/>
    <property type="match status" value="1"/>
</dbReference>
<comment type="function">
    <text evidence="1">Essential for recycling GMP and indirectly, cGMP.</text>
</comment>
<comment type="catalytic activity">
    <reaction evidence="1">
        <text>GMP + ATP = GDP + ADP</text>
        <dbReference type="Rhea" id="RHEA:20780"/>
        <dbReference type="ChEBI" id="CHEBI:30616"/>
        <dbReference type="ChEBI" id="CHEBI:58115"/>
        <dbReference type="ChEBI" id="CHEBI:58189"/>
        <dbReference type="ChEBI" id="CHEBI:456216"/>
        <dbReference type="EC" id="2.7.4.8"/>
    </reaction>
</comment>
<comment type="subcellular location">
    <subcellularLocation>
        <location evidence="1">Cytoplasm</location>
    </subcellularLocation>
</comment>
<comment type="similarity">
    <text evidence="1">Belongs to the guanylate kinase family.</text>
</comment>
<evidence type="ECO:0000255" key="1">
    <source>
        <dbReference type="HAMAP-Rule" id="MF_00328"/>
    </source>
</evidence>
<reference key="1">
    <citation type="journal article" date="2005" name="Genome Res.">
        <title>Comparative and functional genomic analyses of the pathogenicity of phytopathogen Xanthomonas campestris pv. campestris.</title>
        <authorList>
            <person name="Qian W."/>
            <person name="Jia Y."/>
            <person name="Ren S.-X."/>
            <person name="He Y.-Q."/>
            <person name="Feng J.-X."/>
            <person name="Lu L.-F."/>
            <person name="Sun Q."/>
            <person name="Ying G."/>
            <person name="Tang D.-J."/>
            <person name="Tang H."/>
            <person name="Wu W."/>
            <person name="Hao P."/>
            <person name="Wang L."/>
            <person name="Jiang B.-L."/>
            <person name="Zeng S."/>
            <person name="Gu W.-Y."/>
            <person name="Lu G."/>
            <person name="Rong L."/>
            <person name="Tian Y."/>
            <person name="Yao Z."/>
            <person name="Fu G."/>
            <person name="Chen B."/>
            <person name="Fang R."/>
            <person name="Qiang B."/>
            <person name="Chen Z."/>
            <person name="Zhao G.-P."/>
            <person name="Tang J.-L."/>
            <person name="He C."/>
        </authorList>
    </citation>
    <scope>NUCLEOTIDE SEQUENCE [LARGE SCALE GENOMIC DNA]</scope>
    <source>
        <strain>8004</strain>
    </source>
</reference>
<sequence>MRGTLYIVAAPSGAGKSSIVNATLARDPKIALSISFTSRAPRPGERHAEHYHFVSAEEFQGMIEAGDFFEYALVHGDWKGTARQSVEPQLAAGHDVLLEIDWQGARQVRQKVPDAVSVFILPPSRQALDERMRKRGQDSEDVMAQRLAAAREEMLHFEEFDYVIINETFDTAVSEMCAIFTASRLRRQAQQQRHAGLIQALLD</sequence>